<gene>
    <name evidence="1" type="primary">rpmB</name>
    <name type="ordered locus">MS1942</name>
</gene>
<sequence>MSRVCQVTGKRPAVGNNRSHALNATRRRFLPNLHTHRFWVESENRFVTLRLTAKGMRIIDKKGIDAVLADIRARGEKI</sequence>
<dbReference type="EMBL" id="AE016827">
    <property type="protein sequence ID" value="AAU38549.1"/>
    <property type="status" value="ALT_INIT"/>
    <property type="molecule type" value="Genomic_DNA"/>
</dbReference>
<dbReference type="RefSeq" id="WP_011201102.1">
    <property type="nucleotide sequence ID" value="NC_006300.1"/>
</dbReference>
<dbReference type="SMR" id="Q65R61"/>
<dbReference type="STRING" id="221988.MS1942"/>
<dbReference type="GeneID" id="93226079"/>
<dbReference type="KEGG" id="msu:MS1942"/>
<dbReference type="eggNOG" id="COG0227">
    <property type="taxonomic scope" value="Bacteria"/>
</dbReference>
<dbReference type="HOGENOM" id="CLU_064548_3_1_6"/>
<dbReference type="OrthoDB" id="9805609at2"/>
<dbReference type="Proteomes" id="UP000000607">
    <property type="component" value="Chromosome"/>
</dbReference>
<dbReference type="GO" id="GO:0022625">
    <property type="term" value="C:cytosolic large ribosomal subunit"/>
    <property type="evidence" value="ECO:0007669"/>
    <property type="project" value="TreeGrafter"/>
</dbReference>
<dbReference type="GO" id="GO:0003735">
    <property type="term" value="F:structural constituent of ribosome"/>
    <property type="evidence" value="ECO:0007669"/>
    <property type="project" value="InterPro"/>
</dbReference>
<dbReference type="GO" id="GO:0006412">
    <property type="term" value="P:translation"/>
    <property type="evidence" value="ECO:0007669"/>
    <property type="project" value="UniProtKB-UniRule"/>
</dbReference>
<dbReference type="FunFam" id="2.30.170.40:FF:000001">
    <property type="entry name" value="50S ribosomal protein L28"/>
    <property type="match status" value="1"/>
</dbReference>
<dbReference type="Gene3D" id="2.30.170.40">
    <property type="entry name" value="Ribosomal protein L28/L24"/>
    <property type="match status" value="1"/>
</dbReference>
<dbReference type="HAMAP" id="MF_00373">
    <property type="entry name" value="Ribosomal_bL28"/>
    <property type="match status" value="1"/>
</dbReference>
<dbReference type="InterPro" id="IPR026569">
    <property type="entry name" value="Ribosomal_bL28"/>
</dbReference>
<dbReference type="InterPro" id="IPR034704">
    <property type="entry name" value="Ribosomal_bL28/bL31-like_sf"/>
</dbReference>
<dbReference type="InterPro" id="IPR001383">
    <property type="entry name" value="Ribosomal_bL28_bact-type"/>
</dbReference>
<dbReference type="InterPro" id="IPR037147">
    <property type="entry name" value="Ribosomal_bL28_sf"/>
</dbReference>
<dbReference type="NCBIfam" id="TIGR00009">
    <property type="entry name" value="L28"/>
    <property type="match status" value="1"/>
</dbReference>
<dbReference type="PANTHER" id="PTHR13528">
    <property type="entry name" value="39S RIBOSOMAL PROTEIN L28, MITOCHONDRIAL"/>
    <property type="match status" value="1"/>
</dbReference>
<dbReference type="PANTHER" id="PTHR13528:SF2">
    <property type="entry name" value="LARGE RIBOSOMAL SUBUNIT PROTEIN BL28M"/>
    <property type="match status" value="1"/>
</dbReference>
<dbReference type="Pfam" id="PF00830">
    <property type="entry name" value="Ribosomal_L28"/>
    <property type="match status" value="1"/>
</dbReference>
<dbReference type="SUPFAM" id="SSF143800">
    <property type="entry name" value="L28p-like"/>
    <property type="match status" value="1"/>
</dbReference>
<organism>
    <name type="scientific">Mannheimia succiniciproducens (strain KCTC 0769BP / MBEL55E)</name>
    <dbReference type="NCBI Taxonomy" id="221988"/>
    <lineage>
        <taxon>Bacteria</taxon>
        <taxon>Pseudomonadati</taxon>
        <taxon>Pseudomonadota</taxon>
        <taxon>Gammaproteobacteria</taxon>
        <taxon>Pasteurellales</taxon>
        <taxon>Pasteurellaceae</taxon>
        <taxon>Basfia</taxon>
    </lineage>
</organism>
<feature type="chain" id="PRO_0000178498" description="Large ribosomal subunit protein bL28">
    <location>
        <begin position="1"/>
        <end position="78"/>
    </location>
</feature>
<feature type="region of interest" description="Disordered" evidence="2">
    <location>
        <begin position="1"/>
        <end position="20"/>
    </location>
</feature>
<keyword id="KW-0687">Ribonucleoprotein</keyword>
<keyword id="KW-0689">Ribosomal protein</keyword>
<comment type="similarity">
    <text evidence="1">Belongs to the bacterial ribosomal protein bL28 family.</text>
</comment>
<comment type="sequence caution" evidence="3">
    <conflict type="erroneous initiation">
        <sequence resource="EMBL-CDS" id="AAU38549"/>
    </conflict>
</comment>
<name>RL28_MANSM</name>
<protein>
    <recommendedName>
        <fullName evidence="1">Large ribosomal subunit protein bL28</fullName>
    </recommendedName>
    <alternativeName>
        <fullName evidence="3">50S ribosomal protein L28</fullName>
    </alternativeName>
</protein>
<evidence type="ECO:0000255" key="1">
    <source>
        <dbReference type="HAMAP-Rule" id="MF_00373"/>
    </source>
</evidence>
<evidence type="ECO:0000256" key="2">
    <source>
        <dbReference type="SAM" id="MobiDB-lite"/>
    </source>
</evidence>
<evidence type="ECO:0000305" key="3"/>
<accession>Q65R61</accession>
<proteinExistence type="inferred from homology"/>
<reference key="1">
    <citation type="journal article" date="2004" name="Nat. Biotechnol.">
        <title>The genome sequence of the capnophilic rumen bacterium Mannheimia succiniciproducens.</title>
        <authorList>
            <person name="Hong S.H."/>
            <person name="Kim J.S."/>
            <person name="Lee S.Y."/>
            <person name="In Y.H."/>
            <person name="Choi S.S."/>
            <person name="Rih J.-K."/>
            <person name="Kim C.H."/>
            <person name="Jeong H."/>
            <person name="Hur C.G."/>
            <person name="Kim J.J."/>
        </authorList>
    </citation>
    <scope>NUCLEOTIDE SEQUENCE [LARGE SCALE GENOMIC DNA]</scope>
    <source>
        <strain>KCTC 0769BP / MBEL55E</strain>
    </source>
</reference>